<accession>C5FRQ0</accession>
<keyword id="KW-0064">Aspartyl protease</keyword>
<keyword id="KW-1003">Cell membrane</keyword>
<keyword id="KW-0325">Glycoprotein</keyword>
<keyword id="KW-0336">GPI-anchor</keyword>
<keyword id="KW-0378">Hydrolase</keyword>
<keyword id="KW-0449">Lipoprotein</keyword>
<keyword id="KW-0472">Membrane</keyword>
<keyword id="KW-0645">Protease</keyword>
<keyword id="KW-1185">Reference proteome</keyword>
<keyword id="KW-0732">Signal</keyword>
<keyword id="KW-0843">Virulence</keyword>
<keyword id="KW-0865">Zymogen</keyword>
<gene>
    <name type="primary">OPSB</name>
    <name type="ORF">MCYG_05372</name>
</gene>
<protein>
    <recommendedName>
        <fullName>Probable aspartic-type endopeptidase OPSB</fullName>
        <ecNumber>3.4.23.-</ecNumber>
    </recommendedName>
</protein>
<sequence length="479" mass="50266">MRGDSFIWSLTTAASLLYATVESLQVVKRDNPSIVGFDIERFQVAKPVHRDIIAKRASGKTVSQDLDNQTIRAHIDTGSSDLWVNTDDSQFCSSRRSPCREGGTFDSSSSSTYQLVSNDFNISYVDGSGASGDYVTDVIEVGGIQLKEFQFAIGHTSSSPLGVLGIGYEAGEALVSRFGDESYPNLPAALVKAGHIRSNAYSLWLNDLSASRGQILFGGVDTGKFEGKLQTVPVLHTSGGDYTSLVIALTSVGIRTASEGSLDTFPAQPVAVAMDSGSSLSYLPDALAAKIYNSIDAVFDPSNNLAFVPCSMVNDDRKLVFTFSSPQITVGMDELVIDLGPDANGNEATFRDGSKACVFGIAPAGRSISILGDTVLRSAYLVYDLDNNEISIAPTRFNSTVTNIMEIGTGKNSVPDATGVPNAVTSAPITQATGLSGIETGVPGARPTSRGAAPTMRPDVTFGVAAAGLAGAGILFAFM</sequence>
<dbReference type="EC" id="3.4.23.-"/>
<dbReference type="EMBL" id="DS995705">
    <property type="protein sequence ID" value="EEQ32553.1"/>
    <property type="molecule type" value="Genomic_DNA"/>
</dbReference>
<dbReference type="RefSeq" id="XP_002845503.1">
    <property type="nucleotide sequence ID" value="XM_002845457.1"/>
</dbReference>
<dbReference type="SMR" id="C5FRQ0"/>
<dbReference type="STRING" id="554155.C5FRQ0"/>
<dbReference type="GlyCosmos" id="C5FRQ0">
    <property type="glycosylation" value="3 sites, No reported glycans"/>
</dbReference>
<dbReference type="GeneID" id="9228711"/>
<dbReference type="VEuPathDB" id="FungiDB:MCYG_05372"/>
<dbReference type="eggNOG" id="KOG1339">
    <property type="taxonomic scope" value="Eukaryota"/>
</dbReference>
<dbReference type="HOGENOM" id="CLU_013253_9_3_1"/>
<dbReference type="OMA" id="CNVTLGT"/>
<dbReference type="OrthoDB" id="771136at2759"/>
<dbReference type="Proteomes" id="UP000002035">
    <property type="component" value="Unassembled WGS sequence"/>
</dbReference>
<dbReference type="GO" id="GO:0005886">
    <property type="term" value="C:plasma membrane"/>
    <property type="evidence" value="ECO:0007669"/>
    <property type="project" value="UniProtKB-SubCell"/>
</dbReference>
<dbReference type="GO" id="GO:0098552">
    <property type="term" value="C:side of membrane"/>
    <property type="evidence" value="ECO:0007669"/>
    <property type="project" value="UniProtKB-KW"/>
</dbReference>
<dbReference type="GO" id="GO:0004190">
    <property type="term" value="F:aspartic-type endopeptidase activity"/>
    <property type="evidence" value="ECO:0007669"/>
    <property type="project" value="UniProtKB-KW"/>
</dbReference>
<dbReference type="GO" id="GO:0006508">
    <property type="term" value="P:proteolysis"/>
    <property type="evidence" value="ECO:0007669"/>
    <property type="project" value="UniProtKB-KW"/>
</dbReference>
<dbReference type="CDD" id="cd05474">
    <property type="entry name" value="SAP_like"/>
    <property type="match status" value="1"/>
</dbReference>
<dbReference type="FunFam" id="2.40.70.10:FF:000011">
    <property type="entry name" value="Aspartic protease"/>
    <property type="match status" value="1"/>
</dbReference>
<dbReference type="Gene3D" id="2.40.70.10">
    <property type="entry name" value="Acid Proteases"/>
    <property type="match status" value="2"/>
</dbReference>
<dbReference type="InterPro" id="IPR001461">
    <property type="entry name" value="Aspartic_peptidase_A1"/>
</dbReference>
<dbReference type="InterPro" id="IPR033121">
    <property type="entry name" value="PEPTIDASE_A1"/>
</dbReference>
<dbReference type="InterPro" id="IPR021109">
    <property type="entry name" value="Peptidase_aspartic_dom_sf"/>
</dbReference>
<dbReference type="InterPro" id="IPR033876">
    <property type="entry name" value="SAP-like"/>
</dbReference>
<dbReference type="PANTHER" id="PTHR47966:SF65">
    <property type="entry name" value="ASPARTIC-TYPE ENDOPEPTIDASE"/>
    <property type="match status" value="1"/>
</dbReference>
<dbReference type="PANTHER" id="PTHR47966">
    <property type="entry name" value="BETA-SITE APP-CLEAVING ENZYME, ISOFORM A-RELATED"/>
    <property type="match status" value="1"/>
</dbReference>
<dbReference type="Pfam" id="PF00026">
    <property type="entry name" value="Asp"/>
    <property type="match status" value="1"/>
</dbReference>
<dbReference type="PRINTS" id="PR00792">
    <property type="entry name" value="PEPSIN"/>
</dbReference>
<dbReference type="SUPFAM" id="SSF50630">
    <property type="entry name" value="Acid proteases"/>
    <property type="match status" value="1"/>
</dbReference>
<dbReference type="PROSITE" id="PS51767">
    <property type="entry name" value="PEPTIDASE_A1"/>
    <property type="match status" value="1"/>
</dbReference>
<comment type="function">
    <text evidence="1">Probable GPI-anchored aspartic-type endopeptidase which contributes to virulence.</text>
</comment>
<comment type="subcellular location">
    <subcellularLocation>
        <location evidence="5">Cell membrane</location>
        <topology evidence="5">Lipid-anchor</topology>
        <topology evidence="5">GPI-anchor</topology>
    </subcellularLocation>
</comment>
<comment type="similarity">
    <text evidence="5">Belongs to the peptidase A1 family.</text>
</comment>
<reference key="1">
    <citation type="journal article" date="2012" name="MBio">
        <title>Comparative genome analysis of Trichophyton rubrum and related dermatophytes reveals candidate genes involved in infection.</title>
        <authorList>
            <person name="Martinez D.A."/>
            <person name="Oliver B.G."/>
            <person name="Graeser Y."/>
            <person name="Goldberg J.M."/>
            <person name="Li W."/>
            <person name="Martinez-Rossi N.M."/>
            <person name="Monod M."/>
            <person name="Shelest E."/>
            <person name="Barton R.C."/>
            <person name="Birch E."/>
            <person name="Brakhage A.A."/>
            <person name="Chen Z."/>
            <person name="Gurr S.J."/>
            <person name="Heiman D."/>
            <person name="Heitman J."/>
            <person name="Kosti I."/>
            <person name="Rossi A."/>
            <person name="Saif S."/>
            <person name="Samalova M."/>
            <person name="Saunders C.W."/>
            <person name="Shea T."/>
            <person name="Summerbell R.C."/>
            <person name="Xu J."/>
            <person name="Young S."/>
            <person name="Zeng Q."/>
            <person name="Birren B.W."/>
            <person name="Cuomo C.A."/>
            <person name="White T.C."/>
        </authorList>
    </citation>
    <scope>NUCLEOTIDE SEQUENCE [LARGE SCALE GENOMIC DNA]</scope>
    <source>
        <strain>ATCC MYA-4605 / CBS 113480</strain>
    </source>
</reference>
<evidence type="ECO:0000250" key="1"/>
<evidence type="ECO:0000255" key="2"/>
<evidence type="ECO:0000255" key="3">
    <source>
        <dbReference type="PROSITE-ProRule" id="PRU01103"/>
    </source>
</evidence>
<evidence type="ECO:0000256" key="4">
    <source>
        <dbReference type="SAM" id="MobiDB-lite"/>
    </source>
</evidence>
<evidence type="ECO:0000305" key="5"/>
<organism>
    <name type="scientific">Arthroderma otae (strain ATCC MYA-4605 / CBS 113480)</name>
    <name type="common">Microsporum canis</name>
    <dbReference type="NCBI Taxonomy" id="554155"/>
    <lineage>
        <taxon>Eukaryota</taxon>
        <taxon>Fungi</taxon>
        <taxon>Dikarya</taxon>
        <taxon>Ascomycota</taxon>
        <taxon>Pezizomycotina</taxon>
        <taxon>Eurotiomycetes</taxon>
        <taxon>Eurotiomycetidae</taxon>
        <taxon>Onygenales</taxon>
        <taxon>Arthrodermataceae</taxon>
        <taxon>Microsporum</taxon>
    </lineage>
</organism>
<name>OPSB_ARTOC</name>
<proteinExistence type="inferred from homology"/>
<feature type="signal peptide" evidence="2">
    <location>
        <begin position="1"/>
        <end position="19"/>
    </location>
</feature>
<feature type="chain" id="PRO_0000397708" description="Probable aspartic-type endopeptidase OPSB">
    <location>
        <begin position="20"/>
        <end position="451"/>
    </location>
</feature>
<feature type="propeptide" id="PRO_0000397709" description="Removed in mature form" evidence="2">
    <location>
        <begin position="452"/>
        <end position="479"/>
    </location>
</feature>
<feature type="domain" description="Peptidase A1" evidence="3">
    <location>
        <begin position="58"/>
        <end position="393"/>
    </location>
</feature>
<feature type="region of interest" description="Disordered" evidence="4">
    <location>
        <begin position="435"/>
        <end position="454"/>
    </location>
</feature>
<feature type="active site" evidence="1">
    <location>
        <position position="76"/>
    </location>
</feature>
<feature type="active site" evidence="1">
    <location>
        <position position="275"/>
    </location>
</feature>
<feature type="lipid moiety-binding region" description="GPI-anchor amidated glycine" evidence="2">
    <location>
        <position position="451"/>
    </location>
</feature>
<feature type="glycosylation site" description="N-linked (GlcNAc...) asparagine" evidence="2">
    <location>
        <position position="68"/>
    </location>
</feature>
<feature type="glycosylation site" description="N-linked (GlcNAc...) asparagine" evidence="2">
    <location>
        <position position="121"/>
    </location>
</feature>
<feature type="glycosylation site" description="N-linked (GlcNAc...) asparagine" evidence="2">
    <location>
        <position position="398"/>
    </location>
</feature>